<feature type="chain" id="PRO_0000052675" description="Hemoglobin subunit alpha-1/2">
    <location>
        <begin position="1"/>
        <end position="141"/>
    </location>
</feature>
<feature type="domain" description="Globin" evidence="3">
    <location>
        <begin position="1"/>
        <end position="141"/>
    </location>
</feature>
<feature type="binding site" evidence="3">
    <location>
        <position position="58"/>
    </location>
    <ligand>
        <name>O2</name>
        <dbReference type="ChEBI" id="CHEBI:15379"/>
    </ligand>
</feature>
<feature type="binding site" description="proximal binding residue" evidence="3">
    <location>
        <position position="87"/>
    </location>
    <ligand>
        <name>heme b</name>
        <dbReference type="ChEBI" id="CHEBI:60344"/>
    </ligand>
    <ligandPart>
        <name>Fe</name>
        <dbReference type="ChEBI" id="CHEBI:18248"/>
    </ligandPart>
</feature>
<feature type="modified residue" description="Phosphoserine" evidence="2">
    <location>
        <position position="3"/>
    </location>
</feature>
<feature type="modified residue" description="N6-succinyllysine" evidence="1">
    <location>
        <position position="7"/>
    </location>
</feature>
<feature type="modified residue" description="N6-succinyllysine" evidence="1">
    <location>
        <position position="11"/>
    </location>
</feature>
<feature type="modified residue" description="N6-acetyllysine; alternate" evidence="2">
    <location>
        <position position="16"/>
    </location>
</feature>
<feature type="modified residue" description="N6-succinyllysine; alternate" evidence="1">
    <location>
        <position position="16"/>
    </location>
</feature>
<feature type="modified residue" description="Phosphotyrosine" evidence="2">
    <location>
        <position position="24"/>
    </location>
</feature>
<feature type="modified residue" description="Phosphoserine" evidence="2">
    <location>
        <position position="35"/>
    </location>
</feature>
<feature type="modified residue" description="N6-succinyllysine" evidence="1">
    <location>
        <position position="40"/>
    </location>
</feature>
<feature type="modified residue" description="Phosphoserine" evidence="2">
    <location>
        <position position="49"/>
    </location>
</feature>
<feature type="modified residue" description="Phosphoserine" evidence="1">
    <location>
        <position position="102"/>
    </location>
</feature>
<feature type="modified residue" description="Phosphothreonine" evidence="1">
    <location>
        <position position="108"/>
    </location>
</feature>
<feature type="modified residue" description="Phosphoserine" evidence="1">
    <location>
        <position position="124"/>
    </location>
</feature>
<feature type="modified residue" description="Phosphoserine" evidence="1">
    <location>
        <position position="131"/>
    </location>
</feature>
<feature type="modified residue" description="Phosphothreonine" evidence="1">
    <location>
        <position position="134"/>
    </location>
</feature>
<feature type="modified residue" description="Phosphothreonine" evidence="1">
    <location>
        <position position="137"/>
    </location>
</feature>
<feature type="modified residue" description="Phosphoserine" evidence="1">
    <location>
        <position position="138"/>
    </location>
</feature>
<feature type="sequence variant" description="In alpha-2.">
    <original>N</original>
    <variation>T</variation>
    <location>
        <position position="68"/>
    </location>
</feature>
<feature type="sequence variant" description="In alpha-2.">
    <original>A</original>
    <variation>V</variation>
    <location>
        <position position="70"/>
    </location>
</feature>
<feature type="sequence variant" description="In alpha-2.">
    <original>A</original>
    <variation>P</variation>
    <location>
        <position position="120"/>
    </location>
</feature>
<comment type="function">
    <text>Involved in oxygen transport from the lung to the various peripheral tissues.</text>
</comment>
<comment type="subunit">
    <text>Heterotetramer of two alpha chains and two beta chains.</text>
</comment>
<comment type="tissue specificity">
    <text>Red blood cells.</text>
</comment>
<comment type="miscellaneous">
    <text>Ghost bat has two hemoglobin components in the ratio 3:2. They share identical beta-chains and differ by three replacements in the alpha chains.</text>
</comment>
<comment type="similarity">
    <text evidence="3">Belongs to the globin family.</text>
</comment>
<evidence type="ECO:0000250" key="1">
    <source>
        <dbReference type="UniProtKB" id="P01942"/>
    </source>
</evidence>
<evidence type="ECO:0000250" key="2">
    <source>
        <dbReference type="UniProtKB" id="P69905"/>
    </source>
</evidence>
<evidence type="ECO:0000255" key="3">
    <source>
        <dbReference type="PROSITE-ProRule" id="PRU00238"/>
    </source>
</evidence>
<keyword id="KW-0007">Acetylation</keyword>
<keyword id="KW-0903">Direct protein sequencing</keyword>
<keyword id="KW-0349">Heme</keyword>
<keyword id="KW-0408">Iron</keyword>
<keyword id="KW-0479">Metal-binding</keyword>
<keyword id="KW-0561">Oxygen transport</keyword>
<keyword id="KW-0597">Phosphoprotein</keyword>
<keyword id="KW-0813">Transport</keyword>
<reference key="1">
    <citation type="journal article" date="1991" name="Biol. Chem. Hoppe-Seyler">
        <title>The primary structure of the hemoglobin from the Australian ghost bat (Macroderma gigas, Microchiroptera).</title>
        <authorList>
            <person name="Singer G.A.M."/>
            <person name="Kleinschmidt T."/>
            <person name="Pettigrew J.D."/>
            <person name="Braunitzer G."/>
        </authorList>
    </citation>
    <scope>PROTEIN SEQUENCE</scope>
</reference>
<name>HBA_MACGG</name>
<sequence>VLSPADKANVKAAWDKVGGQAGDYGAEALERMFLSFPTTKTYFPHFDLSHGSAQVKAHGKKVGDALSNAAGHLDDLPGALSALSDLHAYKLRVDPVNFKLLSHCLLVTLASHHAAEFTPAVHASLDKFLASVGTVLTSKYR</sequence>
<organism>
    <name type="scientific">Macroderma gigas</name>
    <name type="common">Australian ghost bat</name>
    <dbReference type="NCBI Taxonomy" id="9411"/>
    <lineage>
        <taxon>Eukaryota</taxon>
        <taxon>Metazoa</taxon>
        <taxon>Chordata</taxon>
        <taxon>Craniata</taxon>
        <taxon>Vertebrata</taxon>
        <taxon>Euteleostomi</taxon>
        <taxon>Mammalia</taxon>
        <taxon>Eutheria</taxon>
        <taxon>Laurasiatheria</taxon>
        <taxon>Chiroptera</taxon>
        <taxon>Yinpterochiroptera</taxon>
        <taxon>Rhinolophoidea</taxon>
        <taxon>Megadermatidae</taxon>
        <taxon>Macroderma</taxon>
    </lineage>
</organism>
<accession>P24659</accession>
<proteinExistence type="evidence at protein level"/>
<protein>
    <recommendedName>
        <fullName>Hemoglobin subunit alpha-1/2</fullName>
    </recommendedName>
    <alternativeName>
        <fullName>Alpha-1/2-globin</fullName>
    </alternativeName>
    <alternativeName>
        <fullName>Hemoglobin alpha-1/2 chain</fullName>
    </alternativeName>
    <alternativeName>
        <fullName>Hemoglobin alpha-I/II chain</fullName>
    </alternativeName>
</protein>
<dbReference type="PIR" id="S20277">
    <property type="entry name" value="S20277"/>
</dbReference>
<dbReference type="PIR" id="S20278">
    <property type="entry name" value="S20278"/>
</dbReference>
<dbReference type="SMR" id="P24659"/>
<dbReference type="GO" id="GO:0072562">
    <property type="term" value="C:blood microparticle"/>
    <property type="evidence" value="ECO:0007669"/>
    <property type="project" value="TreeGrafter"/>
</dbReference>
<dbReference type="GO" id="GO:0031838">
    <property type="term" value="C:haptoglobin-hemoglobin complex"/>
    <property type="evidence" value="ECO:0007669"/>
    <property type="project" value="TreeGrafter"/>
</dbReference>
<dbReference type="GO" id="GO:0005833">
    <property type="term" value="C:hemoglobin complex"/>
    <property type="evidence" value="ECO:0007669"/>
    <property type="project" value="InterPro"/>
</dbReference>
<dbReference type="GO" id="GO:0031720">
    <property type="term" value="F:haptoglobin binding"/>
    <property type="evidence" value="ECO:0007669"/>
    <property type="project" value="TreeGrafter"/>
</dbReference>
<dbReference type="GO" id="GO:0020037">
    <property type="term" value="F:heme binding"/>
    <property type="evidence" value="ECO:0007669"/>
    <property type="project" value="InterPro"/>
</dbReference>
<dbReference type="GO" id="GO:0005506">
    <property type="term" value="F:iron ion binding"/>
    <property type="evidence" value="ECO:0007669"/>
    <property type="project" value="InterPro"/>
</dbReference>
<dbReference type="GO" id="GO:0043177">
    <property type="term" value="F:organic acid binding"/>
    <property type="evidence" value="ECO:0007669"/>
    <property type="project" value="TreeGrafter"/>
</dbReference>
<dbReference type="GO" id="GO:0019825">
    <property type="term" value="F:oxygen binding"/>
    <property type="evidence" value="ECO:0007669"/>
    <property type="project" value="InterPro"/>
</dbReference>
<dbReference type="GO" id="GO:0005344">
    <property type="term" value="F:oxygen carrier activity"/>
    <property type="evidence" value="ECO:0007669"/>
    <property type="project" value="UniProtKB-KW"/>
</dbReference>
<dbReference type="GO" id="GO:0004601">
    <property type="term" value="F:peroxidase activity"/>
    <property type="evidence" value="ECO:0007669"/>
    <property type="project" value="TreeGrafter"/>
</dbReference>
<dbReference type="GO" id="GO:0042744">
    <property type="term" value="P:hydrogen peroxide catabolic process"/>
    <property type="evidence" value="ECO:0007669"/>
    <property type="project" value="TreeGrafter"/>
</dbReference>
<dbReference type="CDD" id="cd08927">
    <property type="entry name" value="Hb-alpha-like"/>
    <property type="match status" value="1"/>
</dbReference>
<dbReference type="FunFam" id="1.10.490.10:FF:000002">
    <property type="entry name" value="Hemoglobin subunit alpha"/>
    <property type="match status" value="1"/>
</dbReference>
<dbReference type="Gene3D" id="1.10.490.10">
    <property type="entry name" value="Globins"/>
    <property type="match status" value="1"/>
</dbReference>
<dbReference type="InterPro" id="IPR000971">
    <property type="entry name" value="Globin"/>
</dbReference>
<dbReference type="InterPro" id="IPR009050">
    <property type="entry name" value="Globin-like_sf"/>
</dbReference>
<dbReference type="InterPro" id="IPR012292">
    <property type="entry name" value="Globin/Proto"/>
</dbReference>
<dbReference type="InterPro" id="IPR002338">
    <property type="entry name" value="Hemoglobin_a-typ"/>
</dbReference>
<dbReference type="InterPro" id="IPR050056">
    <property type="entry name" value="Hemoglobin_oxygen_transport"/>
</dbReference>
<dbReference type="InterPro" id="IPR002339">
    <property type="entry name" value="Hemoglobin_pi"/>
</dbReference>
<dbReference type="PANTHER" id="PTHR11442">
    <property type="entry name" value="HEMOGLOBIN FAMILY MEMBER"/>
    <property type="match status" value="1"/>
</dbReference>
<dbReference type="PANTHER" id="PTHR11442:SF48">
    <property type="entry name" value="HEMOGLOBIN SUBUNIT ALPHA"/>
    <property type="match status" value="1"/>
</dbReference>
<dbReference type="Pfam" id="PF00042">
    <property type="entry name" value="Globin"/>
    <property type="match status" value="1"/>
</dbReference>
<dbReference type="PRINTS" id="PR00612">
    <property type="entry name" value="ALPHAHAEM"/>
</dbReference>
<dbReference type="PRINTS" id="PR00815">
    <property type="entry name" value="PIHAEM"/>
</dbReference>
<dbReference type="SUPFAM" id="SSF46458">
    <property type="entry name" value="Globin-like"/>
    <property type="match status" value="1"/>
</dbReference>
<dbReference type="PROSITE" id="PS01033">
    <property type="entry name" value="GLOBIN"/>
    <property type="match status" value="1"/>
</dbReference>